<evidence type="ECO:0000250" key="1">
    <source>
        <dbReference type="UniProtKB" id="P84077"/>
    </source>
</evidence>
<evidence type="ECO:0000250" key="2">
    <source>
        <dbReference type="UniProtKB" id="P84080"/>
    </source>
</evidence>
<evidence type="ECO:0000250" key="3">
    <source>
        <dbReference type="UniProtKB" id="Q94650"/>
    </source>
</evidence>
<evidence type="ECO:0000255" key="4"/>
<evidence type="ECO:0000269" key="5">
    <source>
    </source>
</evidence>
<evidence type="ECO:0000269" key="6">
    <source>
    </source>
</evidence>
<evidence type="ECO:0000269" key="7">
    <source>
    </source>
</evidence>
<evidence type="ECO:0000269" key="8">
    <source>
    </source>
</evidence>
<evidence type="ECO:0000303" key="9">
    <source>
    </source>
</evidence>
<evidence type="ECO:0000305" key="10"/>
<evidence type="ECO:0000312" key="11">
    <source>
        <dbReference type="EMBL" id="FAA01393.1"/>
    </source>
</evidence>
<evidence type="ECO:0007744" key="12">
    <source>
        <dbReference type="PDB" id="3LRP"/>
    </source>
</evidence>
<evidence type="ECO:0007829" key="13">
    <source>
        <dbReference type="PDB" id="3LRP"/>
    </source>
</evidence>
<dbReference type="EC" id="3.6.5.2" evidence="7"/>
<dbReference type="EMBL" id="LN999944">
    <property type="protein sequence ID" value="CZT98464.1"/>
    <property type="molecule type" value="Genomic_DNA"/>
</dbReference>
<dbReference type="EMBL" id="BR001667">
    <property type="protein sequence ID" value="FAA01393.1"/>
    <property type="molecule type" value="Genomic_DNA"/>
</dbReference>
<dbReference type="RefSeq" id="XP_001347487.1">
    <property type="nucleotide sequence ID" value="XM_001347451.1"/>
</dbReference>
<dbReference type="PDB" id="3LRP">
    <property type="method" value="X-ray"/>
    <property type="resolution" value="2.50 A"/>
    <property type="chains" value="A=1-181"/>
</dbReference>
<dbReference type="PDBsum" id="3LRP"/>
<dbReference type="SMR" id="Q7KQL3"/>
<dbReference type="FunCoup" id="Q7KQL3">
    <property type="interactions" value="24"/>
</dbReference>
<dbReference type="STRING" id="36329.Q7KQL3"/>
<dbReference type="SwissPalm" id="Q7KQL3"/>
<dbReference type="PaxDb" id="5833-PF10_0203"/>
<dbReference type="EnsemblProtists" id="CZT98464">
    <property type="protein sequence ID" value="CZT98464"/>
    <property type="gene ID" value="PF3D7_1020900"/>
</dbReference>
<dbReference type="GeneID" id="810360"/>
<dbReference type="KEGG" id="pfa:PF3D7_1020900"/>
<dbReference type="VEuPathDB" id="PlasmoDB:PF3D7_1020900"/>
<dbReference type="VEuPathDB" id="PlasmoDB:Pf7G8-2_000306500"/>
<dbReference type="VEuPathDB" id="PlasmoDB:PfNF135_100026200"/>
<dbReference type="VEuPathDB" id="PlasmoDB:PfNF166_100025800"/>
<dbReference type="VEuPathDB" id="PlasmoDB:PfNF54_100026000"/>
<dbReference type="HOGENOM" id="CLU_040729_9_3_1"/>
<dbReference type="OMA" id="HYYANTN"/>
<dbReference type="OrthoDB" id="2011769at2759"/>
<dbReference type="PhylomeDB" id="Q7KQL3"/>
<dbReference type="Reactome" id="R-PFA-1660499">
    <property type="pathway name" value="Synthesis of PIPs at the plasma membrane"/>
</dbReference>
<dbReference type="Reactome" id="R-PFA-1660514">
    <property type="pathway name" value="Synthesis of PIPs at the Golgi membrane"/>
</dbReference>
<dbReference type="Reactome" id="R-PFA-199992">
    <property type="pathway name" value="trans-Golgi Network Vesicle Budding"/>
</dbReference>
<dbReference type="Reactome" id="R-PFA-5620916">
    <property type="pathway name" value="VxPx cargo-targeting to cilium"/>
</dbReference>
<dbReference type="Reactome" id="R-PFA-6807878">
    <property type="pathway name" value="COPI-mediated anterograde transport"/>
</dbReference>
<dbReference type="Reactome" id="R-PFA-6811434">
    <property type="pathway name" value="COPI-dependent Golgi-to-ER retrograde traffic"/>
</dbReference>
<dbReference type="Reactome" id="R-PFA-9845576">
    <property type="pathway name" value="Glycosphingolipid transport"/>
</dbReference>
<dbReference type="EvolutionaryTrace" id="Q7KQL3"/>
<dbReference type="Proteomes" id="UP000001450">
    <property type="component" value="Chromosome 10"/>
</dbReference>
<dbReference type="GO" id="GO:0005737">
    <property type="term" value="C:cytoplasm"/>
    <property type="evidence" value="ECO:0000318"/>
    <property type="project" value="GO_Central"/>
</dbReference>
<dbReference type="GO" id="GO:0000139">
    <property type="term" value="C:Golgi membrane"/>
    <property type="evidence" value="ECO:0007669"/>
    <property type="project" value="UniProtKB-SubCell"/>
</dbReference>
<dbReference type="GO" id="GO:0005525">
    <property type="term" value="F:GTP binding"/>
    <property type="evidence" value="ECO:0000314"/>
    <property type="project" value="GeneDB"/>
</dbReference>
<dbReference type="GO" id="GO:0003924">
    <property type="term" value="F:GTPase activity"/>
    <property type="evidence" value="ECO:0007669"/>
    <property type="project" value="InterPro"/>
</dbReference>
<dbReference type="GO" id="GO:0006886">
    <property type="term" value="P:intracellular protein transport"/>
    <property type="evidence" value="ECO:0000318"/>
    <property type="project" value="GO_Central"/>
</dbReference>
<dbReference type="GO" id="GO:0016192">
    <property type="term" value="P:vesicle-mediated transport"/>
    <property type="evidence" value="ECO:0000318"/>
    <property type="project" value="GO_Central"/>
</dbReference>
<dbReference type="CDD" id="cd04150">
    <property type="entry name" value="Arf1_5_like"/>
    <property type="match status" value="1"/>
</dbReference>
<dbReference type="FunFam" id="3.40.50.300:FF:000024">
    <property type="entry name" value="ADP-ribosylation factor 1"/>
    <property type="match status" value="1"/>
</dbReference>
<dbReference type="Gene3D" id="3.40.50.300">
    <property type="entry name" value="P-loop containing nucleotide triphosphate hydrolases"/>
    <property type="match status" value="1"/>
</dbReference>
<dbReference type="InterPro" id="IPR045872">
    <property type="entry name" value="Arf1-5-like"/>
</dbReference>
<dbReference type="InterPro" id="IPR027417">
    <property type="entry name" value="P-loop_NTPase"/>
</dbReference>
<dbReference type="InterPro" id="IPR005225">
    <property type="entry name" value="Small_GTP-bd"/>
</dbReference>
<dbReference type="InterPro" id="IPR024156">
    <property type="entry name" value="Small_GTPase_ARF"/>
</dbReference>
<dbReference type="InterPro" id="IPR006689">
    <property type="entry name" value="Small_GTPase_ARF/SAR"/>
</dbReference>
<dbReference type="NCBIfam" id="TIGR00231">
    <property type="entry name" value="small_GTP"/>
    <property type="match status" value="1"/>
</dbReference>
<dbReference type="PANTHER" id="PTHR11711">
    <property type="entry name" value="ADP RIBOSYLATION FACTOR-RELATED"/>
    <property type="match status" value="1"/>
</dbReference>
<dbReference type="Pfam" id="PF00025">
    <property type="entry name" value="Arf"/>
    <property type="match status" value="1"/>
</dbReference>
<dbReference type="PRINTS" id="PR00328">
    <property type="entry name" value="SAR1GTPBP"/>
</dbReference>
<dbReference type="SMART" id="SM00177">
    <property type="entry name" value="ARF"/>
    <property type="match status" value="1"/>
</dbReference>
<dbReference type="SMART" id="SM00175">
    <property type="entry name" value="RAB"/>
    <property type="match status" value="1"/>
</dbReference>
<dbReference type="SMART" id="SM00178">
    <property type="entry name" value="SAR"/>
    <property type="match status" value="1"/>
</dbReference>
<dbReference type="SUPFAM" id="SSF52540">
    <property type="entry name" value="P-loop containing nucleoside triphosphate hydrolases"/>
    <property type="match status" value="1"/>
</dbReference>
<dbReference type="PROSITE" id="PS51417">
    <property type="entry name" value="ARF"/>
    <property type="match status" value="1"/>
</dbReference>
<protein>
    <recommendedName>
        <fullName evidence="9">ADP-ribosylation factor 1</fullName>
        <shortName evidence="9">PfARF1</shortName>
        <ecNumber evidence="7">3.6.5.2</ecNumber>
    </recommendedName>
</protein>
<comment type="function">
    <text evidence="1 5 6 8">Small GTPase involved in protein trafficking between different compartments (PubMed:21045287). Modulates vesicle budding and uncoating within the Golgi complex (By similarity). In its GTP-bound form, triggers the recruitment of coatomer proteins to the Golgi membrane (By similarity). The hydrolysis of ARF1-bound GTP, which is mediated by ARFGAPs proteins, is required for dissociation of coat proteins from Golgi membranes and vesicles (By similarity). Regulates the transport of N-acylated AK2 to the parasitophorous vacuole membrane (PubMed:33604307). May be involved in the activation of lipid kinase PIP5K (PubMed:19171150).</text>
</comment>
<comment type="catalytic activity">
    <reaction evidence="7">
        <text>GTP + H2O = GDP + phosphate + H(+)</text>
        <dbReference type="Rhea" id="RHEA:19669"/>
        <dbReference type="ChEBI" id="CHEBI:15377"/>
        <dbReference type="ChEBI" id="CHEBI:15378"/>
        <dbReference type="ChEBI" id="CHEBI:37565"/>
        <dbReference type="ChEBI" id="CHEBI:43474"/>
        <dbReference type="ChEBI" id="CHEBI:58189"/>
        <dbReference type="EC" id="3.6.5.2"/>
    </reaction>
</comment>
<comment type="activity regulation">
    <text evidence="3 7">Alternates between an inactive GDP-bound form and an active GTP-bound form (PubMed:32144363). Intrinsic GTPase activity is almost undetectable in vitro (By similarity). Activated by a guanine nucleotide-exchange factor (GEF) and inactivated by GTPase-activating protein ARFGAP1 (PubMed:32144363).</text>
</comment>
<comment type="subunit">
    <text evidence="8">May interact with GTPase RAB5b.</text>
</comment>
<comment type="subcellular location">
    <subcellularLocation>
        <location evidence="8">Golgi apparatus membrane</location>
        <topology evidence="1">Lipid-anchor</topology>
        <orientation evidence="10">Cytoplasmic side</orientation>
    </subcellularLocation>
    <text evidence="2">In the GDP-bound form, associates transiently with the membranes via its myristoylated N-terminus where guanine nucleotide-exchange factor (GEF)-mediated nucleotide exchange occurs (By similarity). Following nucleotide exchange, the GTP-bound form undergoes a conformational change, leading to the exposure of a myristoylated N-terminal amphipathic helix that provides stable membrane anchorage (By similarity).</text>
</comment>
<comment type="similarity">
    <text evidence="4">Belongs to the small GTPase superfamily. Arf family.</text>
</comment>
<organism>
    <name type="scientific">Plasmodium falciparum (isolate 3D7)</name>
    <dbReference type="NCBI Taxonomy" id="36329"/>
    <lineage>
        <taxon>Eukaryota</taxon>
        <taxon>Sar</taxon>
        <taxon>Alveolata</taxon>
        <taxon>Apicomplexa</taxon>
        <taxon>Aconoidasida</taxon>
        <taxon>Haemosporida</taxon>
        <taxon>Plasmodiidae</taxon>
        <taxon>Plasmodium</taxon>
        <taxon>Plasmodium (Laverania)</taxon>
    </lineage>
</organism>
<proteinExistence type="evidence at protein level"/>
<accession>Q7KQL3</accession>
<accession>A0A143ZY58</accession>
<accession>A0A7S4U544</accession>
<sequence>MGLYVSRLFNRLFQKKDVRILMVGLDAAGKTTILYKVKLGEVVTTIPTIGFNVETVEFRNISFTVWDVGGQDKIRPLWRHYYSNTDGLIFVVDSNDRERIDDAREELHRMINEEELKDAIILVFANKQDLPNAMSAAEVTEKLHLNTIRERNWFIQSTCATRGDGLYEGFDWLTTHLNNAK</sequence>
<gene>
    <name evidence="9" type="primary">ARF1</name>
    <name evidence="3" type="synonym">ARF</name>
    <name type="ORF">PF10_0203</name>
    <name type="ORF">PF3D7_1020900</name>
</gene>
<feature type="initiator methionine" description="Removed" evidence="1">
    <location>
        <position position="1"/>
    </location>
</feature>
<feature type="chain" id="PRO_0000412994" description="ADP-ribosylation factor 1">
    <location>
        <begin position="2"/>
        <end position="181"/>
    </location>
</feature>
<feature type="region of interest" description="Important for the stable binding to the membranes" evidence="2">
    <location>
        <begin position="3"/>
        <end position="16"/>
    </location>
</feature>
<feature type="binding site" evidence="6 12">
    <location>
        <begin position="27"/>
        <end position="32"/>
    </location>
    <ligand>
        <name>GTP</name>
        <dbReference type="ChEBI" id="CHEBI:37565"/>
    </ligand>
</feature>
<feature type="binding site" evidence="6 12">
    <location>
        <begin position="126"/>
        <end position="129"/>
    </location>
    <ligand>
        <name>GTP</name>
        <dbReference type="ChEBI" id="CHEBI:37565"/>
    </ligand>
</feature>
<feature type="binding site" evidence="6 12">
    <location>
        <position position="160"/>
    </location>
    <ligand>
        <name>GTP</name>
        <dbReference type="ChEBI" id="CHEBI:37565"/>
    </ligand>
</feature>
<feature type="lipid moiety-binding region" description="N-myristoyl glycine" evidence="1">
    <location>
        <position position="2"/>
    </location>
</feature>
<feature type="helix" evidence="13">
    <location>
        <begin position="2"/>
        <end position="8"/>
    </location>
</feature>
<feature type="helix" evidence="13">
    <location>
        <begin position="9"/>
        <end position="12"/>
    </location>
</feature>
<feature type="strand" evidence="13">
    <location>
        <begin position="18"/>
        <end position="25"/>
    </location>
</feature>
<feature type="helix" evidence="13">
    <location>
        <begin position="30"/>
        <end position="37"/>
    </location>
</feature>
<feature type="strand" evidence="13">
    <location>
        <begin position="43"/>
        <end position="45"/>
    </location>
</feature>
<feature type="strand" evidence="13">
    <location>
        <begin position="53"/>
        <end position="58"/>
    </location>
</feature>
<feature type="strand" evidence="13">
    <location>
        <begin position="61"/>
        <end position="67"/>
    </location>
</feature>
<feature type="strand" evidence="13">
    <location>
        <begin position="69"/>
        <end position="71"/>
    </location>
</feature>
<feature type="helix" evidence="13">
    <location>
        <begin position="75"/>
        <end position="78"/>
    </location>
</feature>
<feature type="helix" evidence="13">
    <location>
        <begin position="79"/>
        <end position="81"/>
    </location>
</feature>
<feature type="turn" evidence="13">
    <location>
        <begin position="82"/>
        <end position="84"/>
    </location>
</feature>
<feature type="strand" evidence="13">
    <location>
        <begin position="87"/>
        <end position="93"/>
    </location>
</feature>
<feature type="helix" evidence="13">
    <location>
        <begin position="100"/>
        <end position="110"/>
    </location>
</feature>
<feature type="helix" evidence="13">
    <location>
        <begin position="114"/>
        <end position="116"/>
    </location>
</feature>
<feature type="strand" evidence="13">
    <location>
        <begin position="120"/>
        <end position="126"/>
    </location>
</feature>
<feature type="helix" evidence="13">
    <location>
        <begin position="136"/>
        <end position="142"/>
    </location>
</feature>
<feature type="helix" evidence="13">
    <location>
        <begin position="145"/>
        <end position="147"/>
    </location>
</feature>
<feature type="strand" evidence="13">
    <location>
        <begin position="153"/>
        <end position="157"/>
    </location>
</feature>
<feature type="turn" evidence="13">
    <location>
        <begin position="160"/>
        <end position="162"/>
    </location>
</feature>
<feature type="helix" evidence="13">
    <location>
        <begin position="166"/>
        <end position="178"/>
    </location>
</feature>
<reference key="1">
    <citation type="journal article" date="2002" name="Nature">
        <title>Genome sequence of the human malaria parasite Plasmodium falciparum.</title>
        <authorList>
            <person name="Gardner M.J."/>
            <person name="Hall N."/>
            <person name="Fung E."/>
            <person name="White O."/>
            <person name="Berriman M."/>
            <person name="Hyman R.W."/>
            <person name="Carlton J.M."/>
            <person name="Pain A."/>
            <person name="Nelson K.E."/>
            <person name="Bowman S."/>
            <person name="Paulsen I.T."/>
            <person name="James K.D."/>
            <person name="Eisen J.A."/>
            <person name="Rutherford K.M."/>
            <person name="Salzberg S.L."/>
            <person name="Craig A."/>
            <person name="Kyes S."/>
            <person name="Chan M.-S."/>
            <person name="Nene V."/>
            <person name="Shallom S.J."/>
            <person name="Suh B."/>
            <person name="Peterson J."/>
            <person name="Angiuoli S."/>
            <person name="Pertea M."/>
            <person name="Allen J."/>
            <person name="Selengut J."/>
            <person name="Haft D."/>
            <person name="Mather M.W."/>
            <person name="Vaidya A.B."/>
            <person name="Martin D.M.A."/>
            <person name="Fairlamb A.H."/>
            <person name="Fraunholz M.J."/>
            <person name="Roos D.S."/>
            <person name="Ralph S.A."/>
            <person name="McFadden G.I."/>
            <person name="Cummings L.M."/>
            <person name="Subramanian G.M."/>
            <person name="Mungall C."/>
            <person name="Venter J.C."/>
            <person name="Carucci D.J."/>
            <person name="Hoffman S.L."/>
            <person name="Newbold C."/>
            <person name="Davis R.W."/>
            <person name="Fraser C.M."/>
            <person name="Barrell B.G."/>
        </authorList>
    </citation>
    <scope>NUCLEOTIDE SEQUENCE [LARGE SCALE GENOMIC DNA]</scope>
    <source>
        <strain>3D7</strain>
    </source>
</reference>
<reference key="2">
    <citation type="journal article" date="2009" name="Int. J. Parasitol.">
        <title>A unique phosphatidylinositol 4-phosphate 5-kinase is activated by ADP-ribosylation factor in Plasmodium falciparum.</title>
        <authorList>
            <person name="Leber W."/>
            <person name="Skippen A."/>
            <person name="Fivelman Q.L."/>
            <person name="Bowyer P.W."/>
            <person name="Cockcroft S."/>
            <person name="Baker D.A."/>
        </authorList>
    </citation>
    <scope>FUNCTION</scope>
</reference>
<reference evidence="11" key="3">
    <citation type="journal article" date="2020" name="Front. Cell. Infect. Microbiol.">
        <title>Rab5b-Associated Arf1 GTPase Regulates Export of N-Myristoylated Adenylate Kinase 2 From the Endoplasmic Reticulum in Plasmodium falciparum.</title>
        <authorList>
            <person name="Taku I."/>
            <person name="Hirai T."/>
            <person name="Makiuchi T."/>
            <person name="Shinzawa N."/>
            <person name="Iwanaga S."/>
            <person name="Annoura T."/>
            <person name="Nagamune K."/>
            <person name="Nozaki T."/>
            <person name="Saito-Nakano Y."/>
        </authorList>
    </citation>
    <scope>IDENTIFICATION</scope>
    <scope>FUNCTION</scope>
    <scope>INTERACTION WITH RAB5B</scope>
    <scope>SUBCELLULAR LOCATION</scope>
    <source>
        <strain evidence="11">3D7</strain>
    </source>
</reference>
<reference key="4">
    <citation type="journal article" date="2020" name="Sci. Rep.">
        <title>Detection of the in vitro modulation of Plasmodium falciparum Arf1 by Sec7 and ArfGAP domains using a colorimetric plate-based assay.</title>
        <authorList>
            <person name="Swart T."/>
            <person name="Khan F.D."/>
            <person name="Ntlantsana A."/>
            <person name="Laming D."/>
            <person name="Veale C.G.L."/>
            <person name="Przyborski J.M."/>
            <person name="Edkins A.L."/>
            <person name="Hoppe H.C."/>
        </authorList>
    </citation>
    <scope>FUNCTION</scope>
    <scope>CATALYTIC ACTIVITY</scope>
    <scope>ACTIVITY REGULATION</scope>
</reference>
<reference evidence="12" key="5">
    <citation type="journal article" date="2010" name="Acta Crystallogr. F">
        <title>Structure of Plasmodium falciparum ADP-ribosylation factor 1.</title>
        <authorList>
            <person name="Cook W.J."/>
            <person name="Smith C.D."/>
            <person name="Senkovich O."/>
            <person name="Holder A.A."/>
            <person name="Chattopadhyay D."/>
        </authorList>
    </citation>
    <scope>FUNCTION</scope>
    <scope>X-RAY CRYSTALLOGRAPHY (2.5 ANGSTROMS) IN COMPLEX WITH GDP</scope>
    <source>
        <strain>3D7</strain>
    </source>
</reference>
<keyword id="KW-0002">3D-structure</keyword>
<keyword id="KW-0931">ER-Golgi transport</keyword>
<keyword id="KW-0333">Golgi apparatus</keyword>
<keyword id="KW-0342">GTP-binding</keyword>
<keyword id="KW-0378">Hydrolase</keyword>
<keyword id="KW-0449">Lipoprotein</keyword>
<keyword id="KW-0472">Membrane</keyword>
<keyword id="KW-0519">Myristate</keyword>
<keyword id="KW-0547">Nucleotide-binding</keyword>
<keyword id="KW-0653">Protein transport</keyword>
<keyword id="KW-1185">Reference proteome</keyword>
<keyword id="KW-0813">Transport</keyword>
<name>ARF1_PLAF7</name>